<comment type="function">
    <text evidence="9">Binds with high affinity to muscular nicotinic acetylcholine receptors (nAChRs) (tested on Torpedo marmorata, Kd=0.07 nM), and with low affinity to neuronal alpha-7/CHRNA7 nAChRs (tested on chimeric alpha-7/CHRNA7, Kd=22 uM) and inhibit acetylcholine from binding to the receptor, thereby impairing neuromuscular transmission (PubMed:7721859). Produces peripheral paralysis by blocking neuromuscular transmission at the postsynaptic site.</text>
</comment>
<comment type="subcellular location">
    <subcellularLocation>
        <location evidence="5">Secreted</location>
    </subcellularLocation>
</comment>
<comment type="tissue specificity">
    <text evidence="13">Expressed by the venom gland.</text>
</comment>
<comment type="similarity">
    <text evidence="12">Belongs to the three-finger toxin family. Short-chain subfamily. Type I alpha-neurotoxin sub-subfamily.</text>
</comment>
<feature type="signal peptide" evidence="5">
    <location>
        <begin position="1"/>
        <end position="21"/>
    </location>
</feature>
<feature type="chain" id="PRO_0000035447" description="Erabutoxin b" evidence="5">
    <location>
        <begin position="22"/>
        <end position="83"/>
    </location>
</feature>
<feature type="region of interest" description="Loop I" evidence="1">
    <location>
        <begin position="24"/>
        <end position="38"/>
    </location>
</feature>
<feature type="region of interest" description="Stretch between loop I and loop II" evidence="1">
    <location>
        <begin position="39"/>
        <end position="44"/>
    </location>
</feature>
<feature type="region of interest" description="Loop II" evidence="1">
    <location>
        <begin position="45"/>
        <end position="62"/>
    </location>
</feature>
<feature type="region of interest" description="Loop III" evidence="1">
    <location>
        <begin position="64"/>
        <end position="75"/>
    </location>
</feature>
<feature type="site" description="Moderately important residue for binding to acetylcholine receptor" evidence="1">
    <location>
        <position position="27"/>
    </location>
</feature>
<feature type="site" description="Very important residue for binding to acetylcholine receptor" evidence="1">
    <location>
        <position position="28"/>
    </location>
</feature>
<feature type="site" description="Key residue for binding to acetylcholine receptor" evidence="1">
    <location>
        <position position="29"/>
    </location>
</feature>
<feature type="site" description="Moderately important residue for binding to acetylcholine receptor" evidence="1">
    <location>
        <position position="30"/>
    </location>
</feature>
<feature type="site" description="Key residue for binding to acetylcholine receptor" evidence="1">
    <location>
        <position position="31"/>
    </location>
</feature>
<feature type="site" description="Moderately important residue for binding to acetylcholine receptor" evidence="1">
    <location>
        <position position="46"/>
    </location>
</feature>
<feature type="site" description="Key residue for binding to acetylcholine receptor" evidence="1">
    <location>
        <position position="48"/>
    </location>
</feature>
<feature type="site" description="Very important residue for binding to acetylcholine receptor" evidence="1">
    <location>
        <position position="50"/>
    </location>
</feature>
<feature type="site" description="Very important residue for binding to acetylcholine receptor" evidence="1">
    <location>
        <position position="52"/>
    </location>
</feature>
<feature type="site" description="Moderately important residue for binding to acetylcholine receptor" evidence="1">
    <location>
        <position position="53"/>
    </location>
</feature>
<feature type="site" description="Key residue for binding to acetylcholine receptor" evidence="1">
    <location>
        <position position="54"/>
    </location>
</feature>
<feature type="site" description="Moderately important residue for binding to acetylcholine receptor" evidence="1">
    <location>
        <position position="55"/>
    </location>
</feature>
<feature type="site" description="Very important residue for binding to acetylcholine receptor" evidence="1">
    <location>
        <position position="57"/>
    </location>
</feature>
<feature type="site" description="Very important residue for binding to acetylcholine receptor" evidence="1">
    <location>
        <position position="59"/>
    </location>
</feature>
<feature type="site" description="Very important residue for binding to acetylcholine receptor" evidence="1">
    <location>
        <position position="68"/>
    </location>
</feature>
<feature type="disulfide bond" evidence="2 3 4 7 8 14 15 16 17">
    <location>
        <begin position="24"/>
        <end position="45"/>
    </location>
</feature>
<feature type="disulfide bond" evidence="2 3 4 7 8 14 15 16 17">
    <location>
        <begin position="38"/>
        <end position="62"/>
    </location>
</feature>
<feature type="disulfide bond" evidence="2 3 4 7 8 14 15 16 17">
    <location>
        <begin position="64"/>
        <end position="75"/>
    </location>
</feature>
<feature type="disulfide bond" evidence="2 3 4 7 8 14 15 16 17">
    <location>
        <begin position="76"/>
        <end position="81"/>
    </location>
</feature>
<feature type="sequence variant" description="May be a real difference between the Philippine and Japanese populations." evidence="6">
    <original>V</original>
    <variation>R</variation>
    <location>
        <position position="80"/>
    </location>
</feature>
<feature type="strand" evidence="19">
    <location>
        <begin position="23"/>
        <end position="25"/>
    </location>
</feature>
<feature type="strand" evidence="18">
    <location>
        <begin position="29"/>
        <end position="31"/>
    </location>
</feature>
<feature type="strand" evidence="19">
    <location>
        <begin position="35"/>
        <end position="37"/>
    </location>
</feature>
<feature type="strand" evidence="19">
    <location>
        <begin position="45"/>
        <end position="52"/>
    </location>
</feature>
<feature type="strand" evidence="19">
    <location>
        <begin position="55"/>
        <end position="63"/>
    </location>
</feature>
<feature type="strand" evidence="19">
    <location>
        <begin position="73"/>
        <end position="76"/>
    </location>
</feature>
<feature type="turn" evidence="19">
    <location>
        <begin position="79"/>
        <end position="82"/>
    </location>
</feature>
<organism>
    <name type="scientific">Laticauda semifasciata</name>
    <name type="common">Black-banded sea krait</name>
    <name type="synonym">Pseudolaticauda semifasciata</name>
    <dbReference type="NCBI Taxonomy" id="8631"/>
    <lineage>
        <taxon>Eukaryota</taxon>
        <taxon>Metazoa</taxon>
        <taxon>Chordata</taxon>
        <taxon>Craniata</taxon>
        <taxon>Vertebrata</taxon>
        <taxon>Euteleostomi</taxon>
        <taxon>Lepidosauria</taxon>
        <taxon>Squamata</taxon>
        <taxon>Bifurcata</taxon>
        <taxon>Unidentata</taxon>
        <taxon>Episquamata</taxon>
        <taxon>Toxicofera</taxon>
        <taxon>Serpentes</taxon>
        <taxon>Colubroidea</taxon>
        <taxon>Elapidae</taxon>
        <taxon>Laticaudinae</taxon>
        <taxon>Laticauda</taxon>
    </lineage>
</organism>
<protein>
    <recommendedName>
        <fullName evidence="11">Erabutoxin b</fullName>
        <shortName>ETXB</shortName>
        <shortName evidence="10">Eb</shortName>
    </recommendedName>
    <alternativeName>
        <fullName>Short neurotoxin 1b</fullName>
    </alternativeName>
</protein>
<dbReference type="EMBL" id="X16950">
    <property type="protein sequence ID" value="CAA34824.1"/>
    <property type="molecule type" value="mRNA"/>
</dbReference>
<dbReference type="EMBL" id="AB017929">
    <property type="protein sequence ID" value="BAA75749.1"/>
    <property type="molecule type" value="mRNA"/>
</dbReference>
<dbReference type="EMBL" id="AB017930">
    <property type="protein sequence ID" value="BAA75750.1"/>
    <property type="molecule type" value="mRNA"/>
</dbReference>
<dbReference type="EMBL" id="AB017931">
    <property type="protein sequence ID" value="BAA75751.1"/>
    <property type="molecule type" value="mRNA"/>
</dbReference>
<dbReference type="EMBL" id="AB098528">
    <property type="protein sequence ID" value="BAC78201.1"/>
    <property type="molecule type" value="Genomic_DNA"/>
</dbReference>
<dbReference type="EMBL" id="AB098529">
    <property type="protein sequence ID" value="BAC78202.1"/>
    <property type="molecule type" value="Genomic_DNA"/>
</dbReference>
<dbReference type="PIR" id="S06931">
    <property type="entry name" value="S06931"/>
</dbReference>
<dbReference type="PDB" id="1ERA">
    <property type="method" value="NMR"/>
    <property type="chains" value="A=22-83"/>
</dbReference>
<dbReference type="PDB" id="1FRA">
    <property type="method" value="NMR"/>
    <property type="chains" value="A=22-83"/>
</dbReference>
<dbReference type="PDB" id="1NXB">
    <property type="method" value="X-ray"/>
    <property type="resolution" value="1.38 A"/>
    <property type="chains" value="A=22-83"/>
</dbReference>
<dbReference type="PDB" id="3EBX">
    <property type="method" value="X-ray"/>
    <property type="resolution" value="1.40 A"/>
    <property type="chains" value="A=22-83"/>
</dbReference>
<dbReference type="PDB" id="6EBX">
    <property type="method" value="X-ray"/>
    <property type="resolution" value="1.70 A"/>
    <property type="chains" value="A/B=22-83"/>
</dbReference>
<dbReference type="PDBsum" id="1ERA"/>
<dbReference type="PDBsum" id="1FRA"/>
<dbReference type="PDBsum" id="1NXB"/>
<dbReference type="PDBsum" id="3EBX"/>
<dbReference type="PDBsum" id="6EBX"/>
<dbReference type="BMRB" id="Q90VW1"/>
<dbReference type="SMR" id="Q90VW1"/>
<dbReference type="EvolutionaryTrace" id="Q90VW1"/>
<dbReference type="GO" id="GO:0005576">
    <property type="term" value="C:extracellular region"/>
    <property type="evidence" value="ECO:0007669"/>
    <property type="project" value="UniProtKB-SubCell"/>
</dbReference>
<dbReference type="GO" id="GO:0030550">
    <property type="term" value="F:acetylcholine receptor inhibitor activity"/>
    <property type="evidence" value="ECO:0007669"/>
    <property type="project" value="UniProtKB-KW"/>
</dbReference>
<dbReference type="GO" id="GO:0099106">
    <property type="term" value="F:ion channel regulator activity"/>
    <property type="evidence" value="ECO:0007669"/>
    <property type="project" value="UniProtKB-KW"/>
</dbReference>
<dbReference type="GO" id="GO:0090729">
    <property type="term" value="F:toxin activity"/>
    <property type="evidence" value="ECO:0007669"/>
    <property type="project" value="UniProtKB-KW"/>
</dbReference>
<dbReference type="CDD" id="cd00206">
    <property type="entry name" value="TFP_snake_toxin"/>
    <property type="match status" value="1"/>
</dbReference>
<dbReference type="FunFam" id="2.10.60.10:FF:000024">
    <property type="entry name" value="Cytotoxin 1"/>
    <property type="match status" value="1"/>
</dbReference>
<dbReference type="Gene3D" id="2.10.60.10">
    <property type="entry name" value="CD59"/>
    <property type="match status" value="1"/>
</dbReference>
<dbReference type="InterPro" id="IPR003571">
    <property type="entry name" value="Snake_3FTx"/>
</dbReference>
<dbReference type="InterPro" id="IPR045860">
    <property type="entry name" value="Snake_toxin-like_sf"/>
</dbReference>
<dbReference type="InterPro" id="IPR018354">
    <property type="entry name" value="Snake_toxin_con_site"/>
</dbReference>
<dbReference type="InterPro" id="IPR054131">
    <property type="entry name" value="Toxin_cobra-type"/>
</dbReference>
<dbReference type="Pfam" id="PF21947">
    <property type="entry name" value="Toxin_cobra-type"/>
    <property type="match status" value="1"/>
</dbReference>
<dbReference type="SUPFAM" id="SSF57302">
    <property type="entry name" value="Snake toxin-like"/>
    <property type="match status" value="1"/>
</dbReference>
<dbReference type="PROSITE" id="PS00272">
    <property type="entry name" value="SNAKE_TOXIN"/>
    <property type="match status" value="1"/>
</dbReference>
<proteinExistence type="evidence at protein level"/>
<keyword id="KW-0002">3D-structure</keyword>
<keyword id="KW-0008">Acetylcholine receptor inhibiting toxin</keyword>
<keyword id="KW-0903">Direct protein sequencing</keyword>
<keyword id="KW-1015">Disulfide bond</keyword>
<keyword id="KW-0872">Ion channel impairing toxin</keyword>
<keyword id="KW-0528">Neurotoxin</keyword>
<keyword id="KW-0629">Postsynaptic neurotoxin</keyword>
<keyword id="KW-0964">Secreted</keyword>
<keyword id="KW-0732">Signal</keyword>
<keyword id="KW-0800">Toxin</keyword>
<accession>Q90VW1</accession>
<accession>P01435</accession>
<reference key="1">
    <citation type="journal article" date="1989" name="Nucleic Acids Res.">
        <title>Sequence analysis of a cDNA encoding a erabutoxin b from the sea-snake Laticauda semifasciata.</title>
        <authorList>
            <person name="Obara K."/>
            <person name="Fuse N."/>
            <person name="Tsuchiya T."/>
            <person name="Nonomura Y."/>
            <person name="Menez A."/>
            <person name="Tamiya T."/>
        </authorList>
    </citation>
    <scope>NUCLEOTIDE SEQUENCE [MRNA]</scope>
    <source>
        <tissue>Venom gland</tissue>
    </source>
</reference>
<reference key="2">
    <citation type="submission" date="1998-09" db="EMBL/GenBank/DDBJ databases">
        <title>Classification of sea snakes in genus Laticauda by nucleotide sequences encoding short chain neurotoxins.</title>
        <authorList>
            <person name="Kariya Y."/>
            <person name="Araki S."/>
            <person name="Agu H."/>
            <person name="Tamiya T."/>
            <person name="Tsuchiya T."/>
        </authorList>
    </citation>
    <scope>NUCLEOTIDE SEQUENCE [MRNA]</scope>
    <source>
        <tissue>Venom gland</tissue>
    </source>
</reference>
<reference key="3">
    <citation type="journal article" date="2003" name="Gene">
        <title>Molecular evolution and diversification of snake toxin genes, revealed by analysis of intron sequences.</title>
        <authorList>
            <person name="Fujimi T.J."/>
            <person name="Nakajyo T."/>
            <person name="Nishimura E."/>
            <person name="Ogura E."/>
            <person name="Tsuchiya T."/>
            <person name="Tamiya T."/>
        </authorList>
    </citation>
    <scope>NUCLEOTIDE SEQUENCE [GENOMIC DNA]</scope>
    <source>
        <tissue>Liver</tissue>
    </source>
</reference>
<reference key="4">
    <citation type="journal article" date="1971" name="Biochem. J.">
        <title>The amino acid sequences of erabutoxins, neurotoxic proteins of sea-snake (Laticauda semifasciata) venom.</title>
        <authorList>
            <person name="Sato S."/>
            <person name="Tamiya N."/>
        </authorList>
    </citation>
    <scope>PROTEIN SEQUENCE OF 22-83</scope>
    <scope>SUBCELLULAR LOCATION</scope>
    <source>
        <tissue>Venom</tissue>
    </source>
</reference>
<reference key="5">
    <citation type="journal article" date="1977" name="Biochem. J.">
        <title>Correction of partial amino acid sequence of erabutoxins.</title>
        <authorList>
            <person name="Maeda N."/>
            <person name="Tamiya N."/>
        </authorList>
    </citation>
    <scope>SEQUENCE REVISION</scope>
    <scope>VARIANT ARG-80</scope>
</reference>
<reference key="6">
    <citation type="journal article" date="1977" name="Biochim. Biophys. Acta">
        <title>Protein sequencing by computer graphics.</title>
        <authorList>
            <person name="Tsernoglou D."/>
            <person name="Petsko G.A."/>
            <person name="Tu A.T."/>
        </authorList>
    </citation>
    <scope>PRELIMINARY PROTEIN SEQUENCE OF 22-83</scope>
</reference>
<reference key="7">
    <citation type="journal article" date="1995" name="J. Biol. Chem.">
        <title>Genetic engineering of snake toxins. The functional site of Erabutoxin a, as delineated by site-directed mutagenesis, includes variant residues.</title>
        <authorList>
            <person name="Tremeau O."/>
            <person name="Lemaire C."/>
            <person name="Drevet P."/>
            <person name="Pinkasfeld S."/>
            <person name="Ducancel F."/>
            <person name="Boulain J.-C."/>
            <person name="Menez A."/>
        </authorList>
    </citation>
    <scope>FUNCTION</scope>
</reference>
<reference key="8">
    <citation type="journal article" date="1997" name="J. Biol. Chem.">
        <title>Only snake curaremimetic toxins with a fifth disulfide bond have high affinity for the neuronal alpha7 nicotinic receptor.</title>
        <authorList>
            <person name="Servent D."/>
            <person name="Winckler-Dietrich V."/>
            <person name="Hu H.-Y."/>
            <person name="Kessler P."/>
            <person name="Drevet P."/>
            <person name="Bertrand D."/>
            <person name="Menez A."/>
        </authorList>
    </citation>
    <scope>FUNCTION</scope>
    <source>
        <tissue>Venom</tissue>
    </source>
</reference>
<reference key="9">
    <citation type="journal article" date="1976" name="FEBS Lett.">
        <title>The crystal structure of a post-synaptic neurotoxin from sea snake at 2.2-A resolution.</title>
        <authorList>
            <person name="Tsernoglou D."/>
            <person name="Petsko G.A."/>
        </authorList>
    </citation>
    <scope>X-RAY CRYSTALLOGRAPHY (2.2 ANGSTROMS) OF 22-83</scope>
</reference>
<reference key="10">
    <citation type="journal article" date="1978" name="Mol. Pharmacol.">
        <title>Structure and function of snake venom curarimimetic neurotoxins.</title>
        <authorList>
            <person name="Tsernoglou D."/>
            <person name="Petsko G.A."/>
            <person name="Hudson R.A."/>
        </authorList>
    </citation>
    <scope>X-RAY CRYSTALLOGRAPHY (1.38 ANGSTROMS) OF 22-83</scope>
    <scope>DISULFIDE BONDS</scope>
</reference>
<reference key="11">
    <citation type="journal article" date="1979" name="Biochem. Biophys. Res. Commun.">
        <title>Molecular conformation of erabutoxin b; atomic coordinates at 2.5-A resolution.</title>
        <authorList>
            <person name="Kimball M.R."/>
            <person name="Sato A."/>
            <person name="Richardson J.S."/>
            <person name="Rosen L.S."/>
            <person name="Low B.W."/>
        </authorList>
    </citation>
    <scope>X-RAY CRYSTALLOGRAPHY (2.5 ANGSTROMS) OF 22-83</scope>
    <scope>DISULFIDE BONDS</scope>
</reference>
<reference key="12">
    <citation type="journal article" date="1986" name="Eur. J. Biochem.">
        <title>Erabutoxin b. Structure/function relationships following initial protein refinement at 0.140-nm resolution.</title>
        <authorList>
            <person name="Low B.W."/>
            <person name="Corfield P.W."/>
        </authorList>
    </citation>
    <scope>X-RAY CRYSTALLOGRAPHY (1.4 ANGSTROMS) OF 22-83</scope>
    <scope>DISULFIDE BONDS</scope>
</reference>
<reference key="13">
    <citation type="journal article" date="1992" name="Acta Crystallogr. B">
        <title>Structure determination of a dimeric form of erabutoxin-b, crystallized from a thiocyanate solution.</title>
        <authorList>
            <person name="Saludjian P."/>
            <person name="Prange T."/>
            <person name="Navaza J."/>
            <person name="Menez R."/>
            <person name="Guilloteau J.P."/>
            <person name="Ries-Kautt M."/>
            <person name="Ducruix A."/>
        </authorList>
    </citation>
    <scope>X-RAY CRYSTALLOGRAPHY (1.7 ANGSTROMS) OF 22-83</scope>
    <scope>DISULFIDE BONDS</scope>
</reference>
<reference key="14">
    <citation type="journal article" date="1994" name="J. Mol. Biol.">
        <title>Tertiary structure of erabutoxin b in aqueous solution as elucidated by two-dimensional nuclear magnetic resonance.</title>
        <authorList>
            <person name="Hatanaka H."/>
            <person name="Oka M."/>
            <person name="Kohda D."/>
            <person name="Tate S."/>
            <person name="Suda A."/>
            <person name="Tamiya N."/>
            <person name="Inagaki F."/>
        </authorList>
    </citation>
    <scope>STRUCTURE BY NMR OF 22-83</scope>
    <scope>DISULFIDE BONDS</scope>
</reference>
<evidence type="ECO:0000250" key="1">
    <source>
        <dbReference type="UniProtKB" id="P60775"/>
    </source>
</evidence>
<evidence type="ECO:0000269" key="2">
    <source>
    </source>
</evidence>
<evidence type="ECO:0000269" key="3">
    <source>
    </source>
</evidence>
<evidence type="ECO:0000269" key="4">
    <source>
    </source>
</evidence>
<evidence type="ECO:0000269" key="5">
    <source>
    </source>
</evidence>
<evidence type="ECO:0000269" key="6">
    <source>
    </source>
</evidence>
<evidence type="ECO:0000269" key="7">
    <source>
    </source>
</evidence>
<evidence type="ECO:0000269" key="8">
    <source>
    </source>
</evidence>
<evidence type="ECO:0000269" key="9">
    <source>
    </source>
</evidence>
<evidence type="ECO:0000303" key="10">
    <source>
    </source>
</evidence>
<evidence type="ECO:0000303" key="11">
    <source>
    </source>
</evidence>
<evidence type="ECO:0000305" key="12"/>
<evidence type="ECO:0000305" key="13">
    <source>
    </source>
</evidence>
<evidence type="ECO:0000312" key="14">
    <source>
        <dbReference type="PDB" id="1ERA"/>
    </source>
</evidence>
<evidence type="ECO:0000312" key="15">
    <source>
        <dbReference type="PDB" id="1FRA"/>
    </source>
</evidence>
<evidence type="ECO:0000312" key="16">
    <source>
        <dbReference type="PDB" id="1NXB"/>
    </source>
</evidence>
<evidence type="ECO:0000312" key="17">
    <source>
        <dbReference type="PDB" id="3EBX"/>
    </source>
</evidence>
<evidence type="ECO:0007829" key="18">
    <source>
        <dbReference type="PDB" id="1ERA"/>
    </source>
</evidence>
<evidence type="ECO:0007829" key="19">
    <source>
        <dbReference type="PDB" id="1NXB"/>
    </source>
</evidence>
<sequence>MKTLLLTLVVVTIVCLDLGYTRICFNHQSSQPQTTKTCSPGESSCYHKQWSDFRGTIIERGCGCPTVKPGIKLSCCESEVCNN</sequence>
<name>3S1EB_LATSE</name>